<sequence length="328" mass="36707">MSNDLTSESKTANRAAGEKFRDADKLAHIPIKVVSSTKATMLRKPSWLRIKLPKSSERIDNIKANLRKNDLHSVCEEASCPNLSECFNHGTATFMILGDICTRRCPFCDVGHGRPLAPKSDEPKKLANSLKDMGLKYVVITSVDRDDLRDGGAQQFADCVKEIGEQAPNTKVEILVPDFRGRMDRALEILNQNPPHVFNHNMETAPRLYTKVRPGANYQWSLDLLKRFGEANPDVTTKSGLMVGLGETNEEILEVMQDLRDHGVTMLTVGQYLQPSKDHLAVERYVHPDDFAMFEREAKKMGYEHAACGPLVRSSYHADKQAAGEEVK</sequence>
<keyword id="KW-0004">4Fe-4S</keyword>
<keyword id="KW-0963">Cytoplasm</keyword>
<keyword id="KW-0408">Iron</keyword>
<keyword id="KW-0411">Iron-sulfur</keyword>
<keyword id="KW-0479">Metal-binding</keyword>
<keyword id="KW-0949">S-adenosyl-L-methionine</keyword>
<keyword id="KW-0808">Transferase</keyword>
<protein>
    <recommendedName>
        <fullName evidence="1">Lipoyl synthase</fullName>
        <ecNumber evidence="1">2.8.1.8</ecNumber>
    </recommendedName>
    <alternativeName>
        <fullName evidence="1">Lip-syn</fullName>
        <shortName evidence="1">LS</shortName>
    </alternativeName>
    <alternativeName>
        <fullName evidence="1">Lipoate synthase</fullName>
    </alternativeName>
    <alternativeName>
        <fullName evidence="1">Lipoic acid synthase</fullName>
    </alternativeName>
    <alternativeName>
        <fullName evidence="1">Sulfur insertion protein LipA</fullName>
    </alternativeName>
</protein>
<proteinExistence type="inferred from homology"/>
<dbReference type="EC" id="2.8.1.8" evidence="1"/>
<dbReference type="EMBL" id="CP000083">
    <property type="protein sequence ID" value="AAZ28477.1"/>
    <property type="molecule type" value="Genomic_DNA"/>
</dbReference>
<dbReference type="RefSeq" id="WP_011042541.1">
    <property type="nucleotide sequence ID" value="NC_003910.7"/>
</dbReference>
<dbReference type="SMR" id="Q484R8"/>
<dbReference type="STRING" id="167879.CPS_1709"/>
<dbReference type="KEGG" id="cps:CPS_1709"/>
<dbReference type="eggNOG" id="COG0320">
    <property type="taxonomic scope" value="Bacteria"/>
</dbReference>
<dbReference type="HOGENOM" id="CLU_033144_2_1_6"/>
<dbReference type="UniPathway" id="UPA00538">
    <property type="reaction ID" value="UER00593"/>
</dbReference>
<dbReference type="Proteomes" id="UP000000547">
    <property type="component" value="Chromosome"/>
</dbReference>
<dbReference type="GO" id="GO:0005737">
    <property type="term" value="C:cytoplasm"/>
    <property type="evidence" value="ECO:0007669"/>
    <property type="project" value="UniProtKB-SubCell"/>
</dbReference>
<dbReference type="GO" id="GO:0051539">
    <property type="term" value="F:4 iron, 4 sulfur cluster binding"/>
    <property type="evidence" value="ECO:0007669"/>
    <property type="project" value="UniProtKB-UniRule"/>
</dbReference>
<dbReference type="GO" id="GO:0016992">
    <property type="term" value="F:lipoate synthase activity"/>
    <property type="evidence" value="ECO:0007669"/>
    <property type="project" value="UniProtKB-UniRule"/>
</dbReference>
<dbReference type="GO" id="GO:0046872">
    <property type="term" value="F:metal ion binding"/>
    <property type="evidence" value="ECO:0007669"/>
    <property type="project" value="UniProtKB-KW"/>
</dbReference>
<dbReference type="CDD" id="cd01335">
    <property type="entry name" value="Radical_SAM"/>
    <property type="match status" value="1"/>
</dbReference>
<dbReference type="FunFam" id="3.20.20.70:FF:000023">
    <property type="entry name" value="Lipoyl synthase"/>
    <property type="match status" value="1"/>
</dbReference>
<dbReference type="Gene3D" id="3.20.20.70">
    <property type="entry name" value="Aldolase class I"/>
    <property type="match status" value="1"/>
</dbReference>
<dbReference type="HAMAP" id="MF_00206">
    <property type="entry name" value="Lipoyl_synth"/>
    <property type="match status" value="1"/>
</dbReference>
<dbReference type="InterPro" id="IPR013785">
    <property type="entry name" value="Aldolase_TIM"/>
</dbReference>
<dbReference type="InterPro" id="IPR006638">
    <property type="entry name" value="Elp3/MiaA/NifB-like_rSAM"/>
</dbReference>
<dbReference type="InterPro" id="IPR031691">
    <property type="entry name" value="LIAS_N"/>
</dbReference>
<dbReference type="InterPro" id="IPR003698">
    <property type="entry name" value="Lipoyl_synth"/>
</dbReference>
<dbReference type="InterPro" id="IPR007197">
    <property type="entry name" value="rSAM"/>
</dbReference>
<dbReference type="NCBIfam" id="TIGR00510">
    <property type="entry name" value="lipA"/>
    <property type="match status" value="1"/>
</dbReference>
<dbReference type="NCBIfam" id="NF004019">
    <property type="entry name" value="PRK05481.1"/>
    <property type="match status" value="1"/>
</dbReference>
<dbReference type="NCBIfam" id="NF009544">
    <property type="entry name" value="PRK12928.1"/>
    <property type="match status" value="1"/>
</dbReference>
<dbReference type="PANTHER" id="PTHR10949">
    <property type="entry name" value="LIPOYL SYNTHASE"/>
    <property type="match status" value="1"/>
</dbReference>
<dbReference type="PANTHER" id="PTHR10949:SF0">
    <property type="entry name" value="LIPOYL SYNTHASE, MITOCHONDRIAL"/>
    <property type="match status" value="1"/>
</dbReference>
<dbReference type="Pfam" id="PF16881">
    <property type="entry name" value="LIAS_N"/>
    <property type="match status" value="1"/>
</dbReference>
<dbReference type="Pfam" id="PF04055">
    <property type="entry name" value="Radical_SAM"/>
    <property type="match status" value="1"/>
</dbReference>
<dbReference type="PIRSF" id="PIRSF005963">
    <property type="entry name" value="Lipoyl_synth"/>
    <property type="match status" value="1"/>
</dbReference>
<dbReference type="SFLD" id="SFLDF00271">
    <property type="entry name" value="lipoyl_synthase"/>
    <property type="match status" value="1"/>
</dbReference>
<dbReference type="SFLD" id="SFLDG01058">
    <property type="entry name" value="lipoyl_synthase_like"/>
    <property type="match status" value="1"/>
</dbReference>
<dbReference type="SMART" id="SM00729">
    <property type="entry name" value="Elp3"/>
    <property type="match status" value="1"/>
</dbReference>
<dbReference type="SUPFAM" id="SSF102114">
    <property type="entry name" value="Radical SAM enzymes"/>
    <property type="match status" value="1"/>
</dbReference>
<dbReference type="PROSITE" id="PS51918">
    <property type="entry name" value="RADICAL_SAM"/>
    <property type="match status" value="1"/>
</dbReference>
<accession>Q484R8</accession>
<feature type="chain" id="PRO_0000325240" description="Lipoyl synthase">
    <location>
        <begin position="1"/>
        <end position="328"/>
    </location>
</feature>
<feature type="domain" description="Radical SAM core" evidence="2">
    <location>
        <begin position="87"/>
        <end position="304"/>
    </location>
</feature>
<feature type="binding site" evidence="1">
    <location>
        <position position="75"/>
    </location>
    <ligand>
        <name>[4Fe-4S] cluster</name>
        <dbReference type="ChEBI" id="CHEBI:49883"/>
        <label>1</label>
    </ligand>
</feature>
<feature type="binding site" evidence="1">
    <location>
        <position position="80"/>
    </location>
    <ligand>
        <name>[4Fe-4S] cluster</name>
        <dbReference type="ChEBI" id="CHEBI:49883"/>
        <label>1</label>
    </ligand>
</feature>
<feature type="binding site" evidence="1">
    <location>
        <position position="86"/>
    </location>
    <ligand>
        <name>[4Fe-4S] cluster</name>
        <dbReference type="ChEBI" id="CHEBI:49883"/>
        <label>1</label>
    </ligand>
</feature>
<feature type="binding site" evidence="1">
    <location>
        <position position="101"/>
    </location>
    <ligand>
        <name>[4Fe-4S] cluster</name>
        <dbReference type="ChEBI" id="CHEBI:49883"/>
        <label>2</label>
        <note>4Fe-4S-S-AdoMet</note>
    </ligand>
</feature>
<feature type="binding site" evidence="1">
    <location>
        <position position="105"/>
    </location>
    <ligand>
        <name>[4Fe-4S] cluster</name>
        <dbReference type="ChEBI" id="CHEBI:49883"/>
        <label>2</label>
        <note>4Fe-4S-S-AdoMet</note>
    </ligand>
</feature>
<feature type="binding site" evidence="1">
    <location>
        <position position="108"/>
    </location>
    <ligand>
        <name>[4Fe-4S] cluster</name>
        <dbReference type="ChEBI" id="CHEBI:49883"/>
        <label>2</label>
        <note>4Fe-4S-S-AdoMet</note>
    </ligand>
</feature>
<feature type="binding site" evidence="1">
    <location>
        <position position="315"/>
    </location>
    <ligand>
        <name>[4Fe-4S] cluster</name>
        <dbReference type="ChEBI" id="CHEBI:49883"/>
        <label>1</label>
    </ligand>
</feature>
<name>LIPA_COLP3</name>
<organism>
    <name type="scientific">Colwellia psychrerythraea (strain 34H / ATCC BAA-681)</name>
    <name type="common">Vibrio psychroerythus</name>
    <dbReference type="NCBI Taxonomy" id="167879"/>
    <lineage>
        <taxon>Bacteria</taxon>
        <taxon>Pseudomonadati</taxon>
        <taxon>Pseudomonadota</taxon>
        <taxon>Gammaproteobacteria</taxon>
        <taxon>Alteromonadales</taxon>
        <taxon>Colwelliaceae</taxon>
        <taxon>Colwellia</taxon>
    </lineage>
</organism>
<reference key="1">
    <citation type="journal article" date="2005" name="Proc. Natl. Acad. Sci. U.S.A.">
        <title>The psychrophilic lifestyle as revealed by the genome sequence of Colwellia psychrerythraea 34H through genomic and proteomic analyses.</title>
        <authorList>
            <person name="Methe B.A."/>
            <person name="Nelson K.E."/>
            <person name="Deming J.W."/>
            <person name="Momen B."/>
            <person name="Melamud E."/>
            <person name="Zhang X."/>
            <person name="Moult J."/>
            <person name="Madupu R."/>
            <person name="Nelson W.C."/>
            <person name="Dodson R.J."/>
            <person name="Brinkac L.M."/>
            <person name="Daugherty S.C."/>
            <person name="Durkin A.S."/>
            <person name="DeBoy R.T."/>
            <person name="Kolonay J.F."/>
            <person name="Sullivan S.A."/>
            <person name="Zhou L."/>
            <person name="Davidsen T.M."/>
            <person name="Wu M."/>
            <person name="Huston A.L."/>
            <person name="Lewis M."/>
            <person name="Weaver B."/>
            <person name="Weidman J.F."/>
            <person name="Khouri H."/>
            <person name="Utterback T.R."/>
            <person name="Feldblyum T.V."/>
            <person name="Fraser C.M."/>
        </authorList>
    </citation>
    <scope>NUCLEOTIDE SEQUENCE [LARGE SCALE GENOMIC DNA]</scope>
    <source>
        <strain>34H / ATCC BAA-681</strain>
    </source>
</reference>
<gene>
    <name evidence="1" type="primary">lipA</name>
    <name type="ordered locus">CPS_1709</name>
</gene>
<comment type="function">
    <text evidence="1">Catalyzes the radical-mediated insertion of two sulfur atoms into the C-6 and C-8 positions of the octanoyl moiety bound to the lipoyl domains of lipoate-dependent enzymes, thereby converting the octanoylated domains into lipoylated derivatives.</text>
</comment>
<comment type="catalytic activity">
    <reaction evidence="1">
        <text>[[Fe-S] cluster scaffold protein carrying a second [4Fe-4S](2+) cluster] + N(6)-octanoyl-L-lysyl-[protein] + 2 oxidized [2Fe-2S]-[ferredoxin] + 2 S-adenosyl-L-methionine + 4 H(+) = [[Fe-S] cluster scaffold protein] + N(6)-[(R)-dihydrolipoyl]-L-lysyl-[protein] + 4 Fe(3+) + 2 hydrogen sulfide + 2 5'-deoxyadenosine + 2 L-methionine + 2 reduced [2Fe-2S]-[ferredoxin]</text>
        <dbReference type="Rhea" id="RHEA:16585"/>
        <dbReference type="Rhea" id="RHEA-COMP:9928"/>
        <dbReference type="Rhea" id="RHEA-COMP:10000"/>
        <dbReference type="Rhea" id="RHEA-COMP:10001"/>
        <dbReference type="Rhea" id="RHEA-COMP:10475"/>
        <dbReference type="Rhea" id="RHEA-COMP:14568"/>
        <dbReference type="Rhea" id="RHEA-COMP:14569"/>
        <dbReference type="ChEBI" id="CHEBI:15378"/>
        <dbReference type="ChEBI" id="CHEBI:17319"/>
        <dbReference type="ChEBI" id="CHEBI:29034"/>
        <dbReference type="ChEBI" id="CHEBI:29919"/>
        <dbReference type="ChEBI" id="CHEBI:33722"/>
        <dbReference type="ChEBI" id="CHEBI:33737"/>
        <dbReference type="ChEBI" id="CHEBI:33738"/>
        <dbReference type="ChEBI" id="CHEBI:57844"/>
        <dbReference type="ChEBI" id="CHEBI:59789"/>
        <dbReference type="ChEBI" id="CHEBI:78809"/>
        <dbReference type="ChEBI" id="CHEBI:83100"/>
        <dbReference type="EC" id="2.8.1.8"/>
    </reaction>
</comment>
<comment type="cofactor">
    <cofactor evidence="1">
        <name>[4Fe-4S] cluster</name>
        <dbReference type="ChEBI" id="CHEBI:49883"/>
    </cofactor>
    <text evidence="1">Binds 2 [4Fe-4S] clusters per subunit. One cluster is coordinated with 3 cysteines and an exchangeable S-adenosyl-L-methionine.</text>
</comment>
<comment type="pathway">
    <text evidence="1">Protein modification; protein lipoylation via endogenous pathway; protein N(6)-(lipoyl)lysine from octanoyl-[acyl-carrier-protein]: step 2/2.</text>
</comment>
<comment type="subcellular location">
    <subcellularLocation>
        <location evidence="1">Cytoplasm</location>
    </subcellularLocation>
</comment>
<comment type="similarity">
    <text evidence="1">Belongs to the radical SAM superfamily. Lipoyl synthase family.</text>
</comment>
<evidence type="ECO:0000255" key="1">
    <source>
        <dbReference type="HAMAP-Rule" id="MF_00206"/>
    </source>
</evidence>
<evidence type="ECO:0000255" key="2">
    <source>
        <dbReference type="PROSITE-ProRule" id="PRU01266"/>
    </source>
</evidence>